<accession>C3MZF2</accession>
<reference key="1">
    <citation type="journal article" date="2009" name="Proc. Natl. Acad. Sci. U.S.A.">
        <title>Biogeography of the Sulfolobus islandicus pan-genome.</title>
        <authorList>
            <person name="Reno M.L."/>
            <person name="Held N.L."/>
            <person name="Fields C.J."/>
            <person name="Burke P.V."/>
            <person name="Whitaker R.J."/>
        </authorList>
    </citation>
    <scope>NUCLEOTIDE SEQUENCE [LARGE SCALE GENOMIC DNA]</scope>
    <source>
        <strain>M.16.27</strain>
    </source>
</reference>
<dbReference type="EC" id="4.2.3.5" evidence="1"/>
<dbReference type="EMBL" id="CP001401">
    <property type="protein sequence ID" value="ACP55784.1"/>
    <property type="molecule type" value="Genomic_DNA"/>
</dbReference>
<dbReference type="RefSeq" id="WP_012718986.1">
    <property type="nucleotide sequence ID" value="NC_012632.1"/>
</dbReference>
<dbReference type="SMR" id="C3MZF2"/>
<dbReference type="GeneID" id="84059194"/>
<dbReference type="KEGG" id="sim:M1627_1913"/>
<dbReference type="HOGENOM" id="CLU_034547_0_0_2"/>
<dbReference type="UniPathway" id="UPA00053">
    <property type="reaction ID" value="UER00090"/>
</dbReference>
<dbReference type="Proteomes" id="UP000002307">
    <property type="component" value="Chromosome"/>
</dbReference>
<dbReference type="GO" id="GO:0005829">
    <property type="term" value="C:cytosol"/>
    <property type="evidence" value="ECO:0007669"/>
    <property type="project" value="TreeGrafter"/>
</dbReference>
<dbReference type="GO" id="GO:0004107">
    <property type="term" value="F:chorismate synthase activity"/>
    <property type="evidence" value="ECO:0007669"/>
    <property type="project" value="UniProtKB-UniRule"/>
</dbReference>
<dbReference type="GO" id="GO:0010181">
    <property type="term" value="F:FMN binding"/>
    <property type="evidence" value="ECO:0007669"/>
    <property type="project" value="TreeGrafter"/>
</dbReference>
<dbReference type="GO" id="GO:0008652">
    <property type="term" value="P:amino acid biosynthetic process"/>
    <property type="evidence" value="ECO:0007669"/>
    <property type="project" value="UniProtKB-KW"/>
</dbReference>
<dbReference type="GO" id="GO:0009073">
    <property type="term" value="P:aromatic amino acid family biosynthetic process"/>
    <property type="evidence" value="ECO:0007669"/>
    <property type="project" value="UniProtKB-KW"/>
</dbReference>
<dbReference type="GO" id="GO:0009423">
    <property type="term" value="P:chorismate biosynthetic process"/>
    <property type="evidence" value="ECO:0007669"/>
    <property type="project" value="UniProtKB-UniRule"/>
</dbReference>
<dbReference type="CDD" id="cd07304">
    <property type="entry name" value="Chorismate_synthase"/>
    <property type="match status" value="1"/>
</dbReference>
<dbReference type="FunFam" id="3.60.150.10:FF:000002">
    <property type="entry name" value="Chorismate synthase"/>
    <property type="match status" value="1"/>
</dbReference>
<dbReference type="Gene3D" id="3.60.150.10">
    <property type="entry name" value="Chorismate synthase AroC"/>
    <property type="match status" value="1"/>
</dbReference>
<dbReference type="HAMAP" id="MF_00300">
    <property type="entry name" value="Chorismate_synth"/>
    <property type="match status" value="1"/>
</dbReference>
<dbReference type="InterPro" id="IPR000453">
    <property type="entry name" value="Chorismate_synth"/>
</dbReference>
<dbReference type="InterPro" id="IPR035904">
    <property type="entry name" value="Chorismate_synth_AroC_sf"/>
</dbReference>
<dbReference type="InterPro" id="IPR020541">
    <property type="entry name" value="Chorismate_synthase_CS"/>
</dbReference>
<dbReference type="NCBIfam" id="TIGR00033">
    <property type="entry name" value="aroC"/>
    <property type="match status" value="1"/>
</dbReference>
<dbReference type="NCBIfam" id="NF003793">
    <property type="entry name" value="PRK05382.1"/>
    <property type="match status" value="1"/>
</dbReference>
<dbReference type="PANTHER" id="PTHR21085">
    <property type="entry name" value="CHORISMATE SYNTHASE"/>
    <property type="match status" value="1"/>
</dbReference>
<dbReference type="PANTHER" id="PTHR21085:SF0">
    <property type="entry name" value="CHORISMATE SYNTHASE"/>
    <property type="match status" value="1"/>
</dbReference>
<dbReference type="Pfam" id="PF01264">
    <property type="entry name" value="Chorismate_synt"/>
    <property type="match status" value="1"/>
</dbReference>
<dbReference type="PIRSF" id="PIRSF001456">
    <property type="entry name" value="Chorismate_synth"/>
    <property type="match status" value="1"/>
</dbReference>
<dbReference type="SUPFAM" id="SSF103263">
    <property type="entry name" value="Chorismate synthase, AroC"/>
    <property type="match status" value="1"/>
</dbReference>
<dbReference type="PROSITE" id="PS00787">
    <property type="entry name" value="CHORISMATE_SYNTHASE_1"/>
    <property type="match status" value="1"/>
</dbReference>
<dbReference type="PROSITE" id="PS00788">
    <property type="entry name" value="CHORISMATE_SYNTHASE_2"/>
    <property type="match status" value="1"/>
</dbReference>
<dbReference type="PROSITE" id="PS00789">
    <property type="entry name" value="CHORISMATE_SYNTHASE_3"/>
    <property type="match status" value="1"/>
</dbReference>
<gene>
    <name evidence="1" type="primary">aroC</name>
    <name type="ordered locus">M1627_1913</name>
</gene>
<sequence>MPGNSFGKLFRVTTFGESHGPAVGVVIDGVPAGLPLTVEDIKFELEFRRPGRLYVSGRREKDEPEILSGIFNNRTTGSPIAVIVRNTDVVSSFYEEIRYKPRPGHADLPFIMKYGYENWDYRGGGRASARETVGRVIAGAVAKKLLMLADTWIAGHLRSLGPEELNEEVTFEEVLCSKYSPVRASKKVLEEKYEALIKKATQEGDSYGGIAEVITKNPPIGLGEPVFDKMKAELAKAIMSIPAVTGFEYGLGFMVSKMKGSEANDEIIRKDNKIGWKYNYAGGILGGLTNGEDLIVRCAFKPTSSIRKPQKTIDLRNLEETYISVIGRHDPAVAIRGVTVVESMVALTLVDHAMRAGVIPLVKLTEEQGNIVQQRWERYVRSCKPMEESQL</sequence>
<feature type="chain" id="PRO_1000204959" description="Chorismate synthase">
    <location>
        <begin position="1"/>
        <end position="391"/>
    </location>
</feature>
<feature type="binding site" evidence="1">
    <location>
        <position position="48"/>
    </location>
    <ligand>
        <name>NADP(+)</name>
        <dbReference type="ChEBI" id="CHEBI:58349"/>
    </ligand>
</feature>
<feature type="binding site" evidence="1">
    <location>
        <begin position="126"/>
        <end position="128"/>
    </location>
    <ligand>
        <name>FMN</name>
        <dbReference type="ChEBI" id="CHEBI:58210"/>
    </ligand>
</feature>
<feature type="binding site" evidence="1">
    <location>
        <position position="286"/>
    </location>
    <ligand>
        <name>FMN</name>
        <dbReference type="ChEBI" id="CHEBI:58210"/>
    </ligand>
</feature>
<feature type="binding site" evidence="1">
    <location>
        <begin position="301"/>
        <end position="305"/>
    </location>
    <ligand>
        <name>FMN</name>
        <dbReference type="ChEBI" id="CHEBI:58210"/>
    </ligand>
</feature>
<feature type="binding site" evidence="1">
    <location>
        <position position="328"/>
    </location>
    <ligand>
        <name>FMN</name>
        <dbReference type="ChEBI" id="CHEBI:58210"/>
    </ligand>
</feature>
<name>AROC_SACI3</name>
<comment type="function">
    <text evidence="1">Catalyzes the anti-1,4-elimination of the C-3 phosphate and the C-6 proR hydrogen from 5-enolpyruvylshikimate-3-phosphate (EPSP) to yield chorismate, which is the branch point compound that serves as the starting substrate for the three terminal pathways of aromatic amino acid biosynthesis. This reaction introduces a second double bond into the aromatic ring system.</text>
</comment>
<comment type="catalytic activity">
    <reaction evidence="1">
        <text>5-O-(1-carboxyvinyl)-3-phosphoshikimate = chorismate + phosphate</text>
        <dbReference type="Rhea" id="RHEA:21020"/>
        <dbReference type="ChEBI" id="CHEBI:29748"/>
        <dbReference type="ChEBI" id="CHEBI:43474"/>
        <dbReference type="ChEBI" id="CHEBI:57701"/>
        <dbReference type="EC" id="4.2.3.5"/>
    </reaction>
</comment>
<comment type="cofactor">
    <cofactor evidence="1">
        <name>FMNH2</name>
        <dbReference type="ChEBI" id="CHEBI:57618"/>
    </cofactor>
    <text evidence="1">Reduced FMN (FMNH(2)).</text>
</comment>
<comment type="pathway">
    <text evidence="1">Metabolic intermediate biosynthesis; chorismate biosynthesis; chorismate from D-erythrose 4-phosphate and phosphoenolpyruvate: step 7/7.</text>
</comment>
<comment type="similarity">
    <text evidence="1">Belongs to the chorismate synthase family.</text>
</comment>
<organism>
    <name type="scientific">Saccharolobus islandicus (strain M.16.27)</name>
    <name type="common">Sulfolobus islandicus</name>
    <dbReference type="NCBI Taxonomy" id="427318"/>
    <lineage>
        <taxon>Archaea</taxon>
        <taxon>Thermoproteota</taxon>
        <taxon>Thermoprotei</taxon>
        <taxon>Sulfolobales</taxon>
        <taxon>Sulfolobaceae</taxon>
        <taxon>Saccharolobus</taxon>
    </lineage>
</organism>
<protein>
    <recommendedName>
        <fullName evidence="1">Chorismate synthase</fullName>
        <shortName evidence="1">CS</shortName>
        <ecNumber evidence="1">4.2.3.5</ecNumber>
    </recommendedName>
    <alternativeName>
        <fullName evidence="1">5-enolpyruvylshikimate-3-phosphate phospholyase</fullName>
    </alternativeName>
</protein>
<evidence type="ECO:0000255" key="1">
    <source>
        <dbReference type="HAMAP-Rule" id="MF_00300"/>
    </source>
</evidence>
<proteinExistence type="inferred from homology"/>
<keyword id="KW-0028">Amino-acid biosynthesis</keyword>
<keyword id="KW-0057">Aromatic amino acid biosynthesis</keyword>
<keyword id="KW-0274">FAD</keyword>
<keyword id="KW-0285">Flavoprotein</keyword>
<keyword id="KW-0288">FMN</keyword>
<keyword id="KW-0456">Lyase</keyword>
<keyword id="KW-0521">NADP</keyword>